<evidence type="ECO:0000250" key="1"/>
<evidence type="ECO:0000305" key="2"/>
<gene>
    <name type="primary">sil8</name>
</gene>
<organism>
    <name type="scientific">Streptomyces virginiae</name>
    <name type="common">Streptomyces cinnamonensis</name>
    <dbReference type="NCBI Taxonomy" id="1961"/>
    <lineage>
        <taxon>Bacteria</taxon>
        <taxon>Bacillati</taxon>
        <taxon>Actinomycetota</taxon>
        <taxon>Actinomycetes</taxon>
        <taxon>Kitasatosporales</taxon>
        <taxon>Streptomycetaceae</taxon>
        <taxon>Streptomyces</taxon>
    </lineage>
</organism>
<proteinExistence type="evidence at protein level"/>
<feature type="chain" id="PRO_0000208670" description="Subtilisin inhibitor-like protein 8">
    <location>
        <begin position="1"/>
        <end position="111"/>
    </location>
</feature>
<feature type="site" description="Reactive bond">
    <location>
        <begin position="71"/>
        <end position="72"/>
    </location>
</feature>
<feature type="disulfide bond" evidence="1">
    <location>
        <begin position="31"/>
        <end position="46"/>
    </location>
</feature>
<feature type="disulfide bond" evidence="1">
    <location>
        <begin position="69"/>
        <end position="99"/>
    </location>
</feature>
<dbReference type="PIR" id="S51032">
    <property type="entry name" value="S51032"/>
</dbReference>
<dbReference type="SMR" id="P80388"/>
<dbReference type="MEROPS" id="I16.005"/>
<dbReference type="eggNOG" id="ENOG50333FU">
    <property type="taxonomic scope" value="Bacteria"/>
</dbReference>
<dbReference type="GO" id="GO:0005576">
    <property type="term" value="C:extracellular region"/>
    <property type="evidence" value="ECO:0007669"/>
    <property type="project" value="UniProtKB-SubCell"/>
</dbReference>
<dbReference type="GO" id="GO:0004867">
    <property type="term" value="F:serine-type endopeptidase inhibitor activity"/>
    <property type="evidence" value="ECO:0007669"/>
    <property type="project" value="UniProtKB-UniRule"/>
</dbReference>
<dbReference type="Gene3D" id="3.30.350.10">
    <property type="entry name" value="Subtilisin inhibitor-like"/>
    <property type="match status" value="1"/>
</dbReference>
<dbReference type="HAMAP" id="MF_00778">
    <property type="entry name" value="SSI"/>
    <property type="match status" value="1"/>
</dbReference>
<dbReference type="InterPro" id="IPR000691">
    <property type="entry name" value="Prot_inh_I16_SSI"/>
</dbReference>
<dbReference type="InterPro" id="IPR020054">
    <property type="entry name" value="Prot_inh_SSI_I16_CS"/>
</dbReference>
<dbReference type="InterPro" id="IPR023549">
    <property type="entry name" value="Subtilisin_inhibitor"/>
</dbReference>
<dbReference type="InterPro" id="IPR036819">
    <property type="entry name" value="Subtilisin_inhibitor-like_sf"/>
</dbReference>
<dbReference type="Pfam" id="PF00720">
    <property type="entry name" value="SSI"/>
    <property type="match status" value="1"/>
</dbReference>
<dbReference type="PRINTS" id="PR00294">
    <property type="entry name" value="SSBTLNINHBTR"/>
</dbReference>
<dbReference type="SUPFAM" id="SSF55399">
    <property type="entry name" value="Subtilisin inhibitor"/>
    <property type="match status" value="1"/>
</dbReference>
<dbReference type="PROSITE" id="PS00999">
    <property type="entry name" value="SSI"/>
    <property type="match status" value="1"/>
</dbReference>
<comment type="function">
    <text>Inhibitor of subtilisin and chymotrypsin.</text>
</comment>
<comment type="subunit">
    <text>Homodimer.</text>
</comment>
<comment type="subcellular location">
    <subcellularLocation>
        <location>Secreted</location>
    </subcellularLocation>
</comment>
<comment type="similarity">
    <text evidence="2">Belongs to the protease inhibitor I16 (SSI) family.</text>
</comment>
<sequence>SLYAPSAMVFSVAQGDDVAAPTVVRATTVSCAPGARGTHPDPKAACAALKSTGGAFDRLLSEPNPDRACPMHYAPVTVSAVGVWEGRRVAWDHTFANSCTMAATLDGNAVF</sequence>
<keyword id="KW-0903">Direct protein sequencing</keyword>
<keyword id="KW-1015">Disulfide bond</keyword>
<keyword id="KW-0646">Protease inhibitor</keyword>
<keyword id="KW-0964">Secreted</keyword>
<keyword id="KW-0722">Serine protease inhibitor</keyword>
<protein>
    <recommendedName>
        <fullName>Subtilisin inhibitor-like protein 8</fullName>
        <shortName>SIL-8</shortName>
        <shortName>SIL8</shortName>
    </recommendedName>
</protein>
<reference key="1">
    <citation type="journal article" date="1994" name="Eur. J. Biochem.">
        <title>Primary structure and inhibitory properties of a subtilisin-chymotrypsin inhibitor from Streptomyces virginiae.</title>
        <authorList>
            <person name="Terabe M."/>
            <person name="Kojima S."/>
            <person name="Taguchi S."/>
            <person name="Momose H."/>
            <person name="Miura K."/>
        </authorList>
    </citation>
    <scope>PROTEIN SEQUENCE</scope>
    <source>
        <strain>4425</strain>
    </source>
</reference>
<name>SSI8_STRVG</name>
<accession>P80388</accession>